<proteinExistence type="inferred from homology"/>
<sequence>MAPSQLPPIFNPTQQDIEQLLAAQCHLGSKNLQVHMEPYLWKTRPDGVNVINIGKTWEKILLAARIIAAVENPADICVISARPYGQRAVLKFAAHTGATAIAGRFTPGNFTNYITRSFKEPRLIIVTDPRTDSQAIKEASYVNIPVLALCDTDSPTDFVDVAIPTNNKGRHSIGLVWWMLAREVLRLRGTLATRETEWDVVPDLYFYRDPEAEENKEIADESKVATAEEVGAGAIESGFAGENWDTQGAGAGVPGTAFAAASAAGPTSWEADGADWAASSAPAAAGESWAETQPAEGKW</sequence>
<name>RSSA_ASPOR</name>
<feature type="chain" id="PRO_0000371622" description="Small ribosomal subunit protein uS2">
    <location>
        <begin position="1"/>
        <end position="299"/>
    </location>
</feature>
<feature type="region of interest" description="Disordered" evidence="2">
    <location>
        <begin position="259"/>
        <end position="299"/>
    </location>
</feature>
<feature type="compositionally biased region" description="Low complexity" evidence="2">
    <location>
        <begin position="259"/>
        <end position="291"/>
    </location>
</feature>
<gene>
    <name type="primary">rps0</name>
    <name type="ORF">AO090012000801</name>
</gene>
<accession>Q2UBZ9</accession>
<organism>
    <name type="scientific">Aspergillus oryzae (strain ATCC 42149 / RIB 40)</name>
    <name type="common">Yellow koji mold</name>
    <dbReference type="NCBI Taxonomy" id="510516"/>
    <lineage>
        <taxon>Eukaryota</taxon>
        <taxon>Fungi</taxon>
        <taxon>Dikarya</taxon>
        <taxon>Ascomycota</taxon>
        <taxon>Pezizomycotina</taxon>
        <taxon>Eurotiomycetes</taxon>
        <taxon>Eurotiomycetidae</taxon>
        <taxon>Eurotiales</taxon>
        <taxon>Aspergillaceae</taxon>
        <taxon>Aspergillus</taxon>
        <taxon>Aspergillus subgen. Circumdati</taxon>
    </lineage>
</organism>
<dbReference type="EMBL" id="BA000052">
    <property type="protein sequence ID" value="BAE60916.1"/>
    <property type="molecule type" value="Genomic_DNA"/>
</dbReference>
<dbReference type="RefSeq" id="XP_001727755.1">
    <property type="nucleotide sequence ID" value="XM_001727703.2"/>
</dbReference>
<dbReference type="SMR" id="Q2UBZ9"/>
<dbReference type="STRING" id="510516.Q2UBZ9"/>
<dbReference type="EnsemblFungi" id="BAE60916">
    <property type="protein sequence ID" value="BAE60916"/>
    <property type="gene ID" value="AO090012000801"/>
</dbReference>
<dbReference type="GeneID" id="5988229"/>
<dbReference type="KEGG" id="aor:AO090012000801"/>
<dbReference type="VEuPathDB" id="FungiDB:AO090012000801"/>
<dbReference type="HOGENOM" id="CLU_058171_0_1_1"/>
<dbReference type="OMA" id="QCHLGAK"/>
<dbReference type="OrthoDB" id="109472at5052"/>
<dbReference type="Proteomes" id="UP000006564">
    <property type="component" value="Chromosome 4"/>
</dbReference>
<dbReference type="GO" id="GO:0022627">
    <property type="term" value="C:cytosolic small ribosomal subunit"/>
    <property type="evidence" value="ECO:0007669"/>
    <property type="project" value="UniProtKB-UniRule"/>
</dbReference>
<dbReference type="GO" id="GO:0003735">
    <property type="term" value="F:structural constituent of ribosome"/>
    <property type="evidence" value="ECO:0007669"/>
    <property type="project" value="UniProtKB-UniRule"/>
</dbReference>
<dbReference type="GO" id="GO:0000028">
    <property type="term" value="P:ribosomal small subunit assembly"/>
    <property type="evidence" value="ECO:0007669"/>
    <property type="project" value="UniProtKB-UniRule"/>
</dbReference>
<dbReference type="GO" id="GO:0006412">
    <property type="term" value="P:translation"/>
    <property type="evidence" value="ECO:0007669"/>
    <property type="project" value="UniProtKB-UniRule"/>
</dbReference>
<dbReference type="CDD" id="cd01425">
    <property type="entry name" value="RPS2"/>
    <property type="match status" value="1"/>
</dbReference>
<dbReference type="FunFam" id="3.40.50.10490:FF:000010">
    <property type="entry name" value="40S ribosomal protein S0"/>
    <property type="match status" value="1"/>
</dbReference>
<dbReference type="Gene3D" id="3.40.50.10490">
    <property type="entry name" value="Glucose-6-phosphate isomerase like protein, domain 1"/>
    <property type="match status" value="1"/>
</dbReference>
<dbReference type="HAMAP" id="MF_03015">
    <property type="entry name" value="Ribosomal_S2_euk"/>
    <property type="match status" value="1"/>
</dbReference>
<dbReference type="InterPro" id="IPR001865">
    <property type="entry name" value="Ribosomal_uS2"/>
</dbReference>
<dbReference type="InterPro" id="IPR032281">
    <property type="entry name" value="Ribosomal_uS2_C"/>
</dbReference>
<dbReference type="InterPro" id="IPR018130">
    <property type="entry name" value="Ribosomal_uS2_CS"/>
</dbReference>
<dbReference type="InterPro" id="IPR027498">
    <property type="entry name" value="Ribosomal_uS2_euk"/>
</dbReference>
<dbReference type="InterPro" id="IPR005707">
    <property type="entry name" value="Ribosomal_uS2_euk/arc"/>
</dbReference>
<dbReference type="InterPro" id="IPR023591">
    <property type="entry name" value="Ribosomal_uS2_flav_dom_sf"/>
</dbReference>
<dbReference type="NCBIfam" id="TIGR01012">
    <property type="entry name" value="uS2_euk_arch"/>
    <property type="match status" value="1"/>
</dbReference>
<dbReference type="PANTHER" id="PTHR11489">
    <property type="entry name" value="40S RIBOSOMAL PROTEIN SA"/>
    <property type="match status" value="1"/>
</dbReference>
<dbReference type="Pfam" id="PF16122">
    <property type="entry name" value="40S_SA_C"/>
    <property type="match status" value="1"/>
</dbReference>
<dbReference type="Pfam" id="PF00318">
    <property type="entry name" value="Ribosomal_S2"/>
    <property type="match status" value="2"/>
</dbReference>
<dbReference type="PRINTS" id="PR00395">
    <property type="entry name" value="RIBOSOMALS2"/>
</dbReference>
<dbReference type="SUPFAM" id="SSF52313">
    <property type="entry name" value="Ribosomal protein S2"/>
    <property type="match status" value="1"/>
</dbReference>
<dbReference type="PROSITE" id="PS00963">
    <property type="entry name" value="RIBOSOMAL_S2_2"/>
    <property type="match status" value="1"/>
</dbReference>
<reference key="1">
    <citation type="journal article" date="2005" name="Nature">
        <title>Genome sequencing and analysis of Aspergillus oryzae.</title>
        <authorList>
            <person name="Machida M."/>
            <person name="Asai K."/>
            <person name="Sano M."/>
            <person name="Tanaka T."/>
            <person name="Kumagai T."/>
            <person name="Terai G."/>
            <person name="Kusumoto K."/>
            <person name="Arima T."/>
            <person name="Akita O."/>
            <person name="Kashiwagi Y."/>
            <person name="Abe K."/>
            <person name="Gomi K."/>
            <person name="Horiuchi H."/>
            <person name="Kitamoto K."/>
            <person name="Kobayashi T."/>
            <person name="Takeuchi M."/>
            <person name="Denning D.W."/>
            <person name="Galagan J.E."/>
            <person name="Nierman W.C."/>
            <person name="Yu J."/>
            <person name="Archer D.B."/>
            <person name="Bennett J.W."/>
            <person name="Bhatnagar D."/>
            <person name="Cleveland T.E."/>
            <person name="Fedorova N.D."/>
            <person name="Gotoh O."/>
            <person name="Horikawa H."/>
            <person name="Hosoyama A."/>
            <person name="Ichinomiya M."/>
            <person name="Igarashi R."/>
            <person name="Iwashita K."/>
            <person name="Juvvadi P.R."/>
            <person name="Kato M."/>
            <person name="Kato Y."/>
            <person name="Kin T."/>
            <person name="Kokubun A."/>
            <person name="Maeda H."/>
            <person name="Maeyama N."/>
            <person name="Maruyama J."/>
            <person name="Nagasaki H."/>
            <person name="Nakajima T."/>
            <person name="Oda K."/>
            <person name="Okada K."/>
            <person name="Paulsen I."/>
            <person name="Sakamoto K."/>
            <person name="Sawano T."/>
            <person name="Takahashi M."/>
            <person name="Takase K."/>
            <person name="Terabayashi Y."/>
            <person name="Wortman J.R."/>
            <person name="Yamada O."/>
            <person name="Yamagata Y."/>
            <person name="Anazawa H."/>
            <person name="Hata Y."/>
            <person name="Koide Y."/>
            <person name="Komori T."/>
            <person name="Koyama Y."/>
            <person name="Minetoki T."/>
            <person name="Suharnan S."/>
            <person name="Tanaka A."/>
            <person name="Isono K."/>
            <person name="Kuhara S."/>
            <person name="Ogasawara N."/>
            <person name="Kikuchi H."/>
        </authorList>
    </citation>
    <scope>NUCLEOTIDE SEQUENCE [LARGE SCALE GENOMIC DNA]</scope>
    <source>
        <strain>ATCC 42149 / RIB 40</strain>
    </source>
</reference>
<keyword id="KW-0963">Cytoplasm</keyword>
<keyword id="KW-1185">Reference proteome</keyword>
<keyword id="KW-0687">Ribonucleoprotein</keyword>
<keyword id="KW-0689">Ribosomal protein</keyword>
<protein>
    <recommendedName>
        <fullName evidence="1">Small ribosomal subunit protein uS2</fullName>
    </recommendedName>
    <alternativeName>
        <fullName evidence="3">40S ribosomal protein S0</fullName>
    </alternativeName>
</protein>
<evidence type="ECO:0000255" key="1">
    <source>
        <dbReference type="HAMAP-Rule" id="MF_03015"/>
    </source>
</evidence>
<evidence type="ECO:0000256" key="2">
    <source>
        <dbReference type="SAM" id="MobiDB-lite"/>
    </source>
</evidence>
<evidence type="ECO:0000305" key="3"/>
<comment type="function">
    <text evidence="1">Required for the assembly and/or stability of the 40S ribosomal subunit. Required for the processing of the 20S rRNA-precursor to mature 18S rRNA in a late step of the maturation of 40S ribosomal subunits.</text>
</comment>
<comment type="subunit">
    <text evidence="1">Component of the small ribosomal subunit. Mature ribosomes consist of a small (40S) and a large (60S) subunit. The 40S subunit contains about 33 different proteins and 1 molecule of RNA (18S). The 60S subunit contains about 49 different proteins and 3 molecules of RNA (25S, 5.8S and 5S). Interacts with rps21.</text>
</comment>
<comment type="subcellular location">
    <subcellularLocation>
        <location evidence="1">Cytoplasm</location>
    </subcellularLocation>
</comment>
<comment type="similarity">
    <text evidence="1">Belongs to the universal ribosomal protein uS2 family.</text>
</comment>